<organism>
    <name type="scientific">Oleidesulfovibrio alaskensis (strain ATCC BAA-1058 / DSM 17464 / G20)</name>
    <name type="common">Desulfovibrio alaskensis</name>
    <dbReference type="NCBI Taxonomy" id="207559"/>
    <lineage>
        <taxon>Bacteria</taxon>
        <taxon>Pseudomonadati</taxon>
        <taxon>Thermodesulfobacteriota</taxon>
        <taxon>Desulfovibrionia</taxon>
        <taxon>Desulfovibrionales</taxon>
        <taxon>Desulfovibrionaceae</taxon>
        <taxon>Oleidesulfovibrio</taxon>
    </lineage>
</organism>
<sequence length="76" mass="8421">MSVEEKVKKIIMDQLGVSAEEVKPEASFVEDLGADSLDLTELIMAMEEEFGTEIDDDDAQKILKVKDAIDYIAGKQ</sequence>
<reference key="1">
    <citation type="journal article" date="2011" name="J. Bacteriol.">
        <title>Complete genome sequence and updated annotation of Desulfovibrio alaskensis G20.</title>
        <authorList>
            <person name="Hauser L.J."/>
            <person name="Land M.L."/>
            <person name="Brown S.D."/>
            <person name="Larimer F."/>
            <person name="Keller K.L."/>
            <person name="Rapp-Giles B.J."/>
            <person name="Price M.N."/>
            <person name="Lin M."/>
            <person name="Bruce D.C."/>
            <person name="Detter J.C."/>
            <person name="Tapia R."/>
            <person name="Han C.S."/>
            <person name="Goodwin L.A."/>
            <person name="Cheng J.F."/>
            <person name="Pitluck S."/>
            <person name="Copeland A."/>
            <person name="Lucas S."/>
            <person name="Nolan M."/>
            <person name="Lapidus A.L."/>
            <person name="Palumbo A.V."/>
            <person name="Wall J.D."/>
        </authorList>
    </citation>
    <scope>NUCLEOTIDE SEQUENCE [LARGE SCALE GENOMIC DNA]</scope>
    <source>
        <strain>ATCC BAA-1058 / DSM 17464 / G20</strain>
    </source>
</reference>
<accession>Q30YL9</accession>
<protein>
    <recommendedName>
        <fullName evidence="1">Acyl carrier protein</fullName>
        <shortName evidence="1">ACP</shortName>
    </recommendedName>
</protein>
<name>ACP_OLEA2</name>
<gene>
    <name evidence="1" type="primary">acpP</name>
    <name type="ordered locus">Dde_2430</name>
</gene>
<feature type="chain" id="PRO_1000066600" description="Acyl carrier protein">
    <location>
        <begin position="1"/>
        <end position="76"/>
    </location>
</feature>
<feature type="domain" description="Carrier" evidence="2">
    <location>
        <begin position="1"/>
        <end position="76"/>
    </location>
</feature>
<feature type="modified residue" description="O-(pantetheine 4'-phosphoryl)serine" evidence="2">
    <location>
        <position position="36"/>
    </location>
</feature>
<dbReference type="EMBL" id="CP000112">
    <property type="protein sequence ID" value="ABB39227.1"/>
    <property type="molecule type" value="Genomic_DNA"/>
</dbReference>
<dbReference type="RefSeq" id="WP_011368296.1">
    <property type="nucleotide sequence ID" value="NC_007519.1"/>
</dbReference>
<dbReference type="SMR" id="Q30YL9"/>
<dbReference type="STRING" id="207559.Dde_2430"/>
<dbReference type="KEGG" id="dde:Dde_2430"/>
<dbReference type="eggNOG" id="COG0236">
    <property type="taxonomic scope" value="Bacteria"/>
</dbReference>
<dbReference type="HOGENOM" id="CLU_108696_5_1_7"/>
<dbReference type="UniPathway" id="UPA00094"/>
<dbReference type="Proteomes" id="UP000002710">
    <property type="component" value="Chromosome"/>
</dbReference>
<dbReference type="GO" id="GO:0005829">
    <property type="term" value="C:cytosol"/>
    <property type="evidence" value="ECO:0007669"/>
    <property type="project" value="TreeGrafter"/>
</dbReference>
<dbReference type="GO" id="GO:0016020">
    <property type="term" value="C:membrane"/>
    <property type="evidence" value="ECO:0007669"/>
    <property type="project" value="GOC"/>
</dbReference>
<dbReference type="GO" id="GO:0000035">
    <property type="term" value="F:acyl binding"/>
    <property type="evidence" value="ECO:0007669"/>
    <property type="project" value="TreeGrafter"/>
</dbReference>
<dbReference type="GO" id="GO:0000036">
    <property type="term" value="F:acyl carrier activity"/>
    <property type="evidence" value="ECO:0007669"/>
    <property type="project" value="UniProtKB-UniRule"/>
</dbReference>
<dbReference type="GO" id="GO:0009245">
    <property type="term" value="P:lipid A biosynthetic process"/>
    <property type="evidence" value="ECO:0007669"/>
    <property type="project" value="TreeGrafter"/>
</dbReference>
<dbReference type="FunFam" id="1.10.1200.10:FF:000001">
    <property type="entry name" value="Acyl carrier protein"/>
    <property type="match status" value="1"/>
</dbReference>
<dbReference type="Gene3D" id="1.10.1200.10">
    <property type="entry name" value="ACP-like"/>
    <property type="match status" value="1"/>
</dbReference>
<dbReference type="HAMAP" id="MF_01217">
    <property type="entry name" value="Acyl_carrier"/>
    <property type="match status" value="1"/>
</dbReference>
<dbReference type="InterPro" id="IPR003231">
    <property type="entry name" value="ACP"/>
</dbReference>
<dbReference type="InterPro" id="IPR036736">
    <property type="entry name" value="ACP-like_sf"/>
</dbReference>
<dbReference type="InterPro" id="IPR009081">
    <property type="entry name" value="PP-bd_ACP"/>
</dbReference>
<dbReference type="InterPro" id="IPR006162">
    <property type="entry name" value="Ppantetheine_attach_site"/>
</dbReference>
<dbReference type="NCBIfam" id="TIGR00517">
    <property type="entry name" value="acyl_carrier"/>
    <property type="match status" value="1"/>
</dbReference>
<dbReference type="NCBIfam" id="NF002148">
    <property type="entry name" value="PRK00982.1-2"/>
    <property type="match status" value="1"/>
</dbReference>
<dbReference type="NCBIfam" id="NF002149">
    <property type="entry name" value="PRK00982.1-3"/>
    <property type="match status" value="1"/>
</dbReference>
<dbReference type="NCBIfam" id="NF002150">
    <property type="entry name" value="PRK00982.1-4"/>
    <property type="match status" value="1"/>
</dbReference>
<dbReference type="NCBIfam" id="NF002151">
    <property type="entry name" value="PRK00982.1-5"/>
    <property type="match status" value="1"/>
</dbReference>
<dbReference type="PANTHER" id="PTHR20863">
    <property type="entry name" value="ACYL CARRIER PROTEIN"/>
    <property type="match status" value="1"/>
</dbReference>
<dbReference type="PANTHER" id="PTHR20863:SF76">
    <property type="entry name" value="CARRIER DOMAIN-CONTAINING PROTEIN"/>
    <property type="match status" value="1"/>
</dbReference>
<dbReference type="Pfam" id="PF00550">
    <property type="entry name" value="PP-binding"/>
    <property type="match status" value="1"/>
</dbReference>
<dbReference type="SUPFAM" id="SSF47336">
    <property type="entry name" value="ACP-like"/>
    <property type="match status" value="1"/>
</dbReference>
<dbReference type="PROSITE" id="PS50075">
    <property type="entry name" value="CARRIER"/>
    <property type="match status" value="1"/>
</dbReference>
<dbReference type="PROSITE" id="PS00012">
    <property type="entry name" value="PHOSPHOPANTETHEINE"/>
    <property type="match status" value="1"/>
</dbReference>
<evidence type="ECO:0000255" key="1">
    <source>
        <dbReference type="HAMAP-Rule" id="MF_01217"/>
    </source>
</evidence>
<evidence type="ECO:0000255" key="2">
    <source>
        <dbReference type="PROSITE-ProRule" id="PRU00258"/>
    </source>
</evidence>
<proteinExistence type="inferred from homology"/>
<keyword id="KW-0963">Cytoplasm</keyword>
<keyword id="KW-0275">Fatty acid biosynthesis</keyword>
<keyword id="KW-0276">Fatty acid metabolism</keyword>
<keyword id="KW-0444">Lipid biosynthesis</keyword>
<keyword id="KW-0443">Lipid metabolism</keyword>
<keyword id="KW-0596">Phosphopantetheine</keyword>
<keyword id="KW-0597">Phosphoprotein</keyword>
<keyword id="KW-1185">Reference proteome</keyword>
<comment type="function">
    <text evidence="1">Carrier of the growing fatty acid chain in fatty acid biosynthesis.</text>
</comment>
<comment type="pathway">
    <text evidence="1">Lipid metabolism; fatty acid biosynthesis.</text>
</comment>
<comment type="subcellular location">
    <subcellularLocation>
        <location evidence="1">Cytoplasm</location>
    </subcellularLocation>
</comment>
<comment type="PTM">
    <text evidence="1">4'-phosphopantetheine is transferred from CoA to a specific serine of apo-ACP by AcpS. This modification is essential for activity because fatty acids are bound in thioester linkage to the sulfhydryl of the prosthetic group.</text>
</comment>
<comment type="similarity">
    <text evidence="1">Belongs to the acyl carrier protein (ACP) family.</text>
</comment>